<feature type="chain" id="PRO_1000140569" description="Small ribosomal subunit protein uS8">
    <location>
        <begin position="1"/>
        <end position="132"/>
    </location>
</feature>
<dbReference type="EMBL" id="AP009152">
    <property type="protein sequence ID" value="BAG28976.1"/>
    <property type="molecule type" value="Genomic_DNA"/>
</dbReference>
<dbReference type="RefSeq" id="WP_012397701.1">
    <property type="nucleotide sequence ID" value="NZ_VECX01000001.1"/>
</dbReference>
<dbReference type="SMR" id="B2GJ06"/>
<dbReference type="STRING" id="378753.KRH_06290"/>
<dbReference type="KEGG" id="krh:KRH_06290"/>
<dbReference type="eggNOG" id="COG0096">
    <property type="taxonomic scope" value="Bacteria"/>
</dbReference>
<dbReference type="HOGENOM" id="CLU_098428_0_1_11"/>
<dbReference type="OrthoDB" id="9802617at2"/>
<dbReference type="Proteomes" id="UP000008838">
    <property type="component" value="Chromosome"/>
</dbReference>
<dbReference type="GO" id="GO:1990904">
    <property type="term" value="C:ribonucleoprotein complex"/>
    <property type="evidence" value="ECO:0007669"/>
    <property type="project" value="UniProtKB-KW"/>
</dbReference>
<dbReference type="GO" id="GO:0005840">
    <property type="term" value="C:ribosome"/>
    <property type="evidence" value="ECO:0007669"/>
    <property type="project" value="UniProtKB-KW"/>
</dbReference>
<dbReference type="GO" id="GO:0019843">
    <property type="term" value="F:rRNA binding"/>
    <property type="evidence" value="ECO:0007669"/>
    <property type="project" value="UniProtKB-UniRule"/>
</dbReference>
<dbReference type="GO" id="GO:0003735">
    <property type="term" value="F:structural constituent of ribosome"/>
    <property type="evidence" value="ECO:0007669"/>
    <property type="project" value="InterPro"/>
</dbReference>
<dbReference type="GO" id="GO:0006412">
    <property type="term" value="P:translation"/>
    <property type="evidence" value="ECO:0007669"/>
    <property type="project" value="UniProtKB-UniRule"/>
</dbReference>
<dbReference type="FunFam" id="3.30.1370.30:FF:000002">
    <property type="entry name" value="30S ribosomal protein S8"/>
    <property type="match status" value="1"/>
</dbReference>
<dbReference type="FunFam" id="3.30.1490.10:FF:000001">
    <property type="entry name" value="30S ribosomal protein S8"/>
    <property type="match status" value="1"/>
</dbReference>
<dbReference type="Gene3D" id="3.30.1370.30">
    <property type="match status" value="1"/>
</dbReference>
<dbReference type="Gene3D" id="3.30.1490.10">
    <property type="match status" value="1"/>
</dbReference>
<dbReference type="HAMAP" id="MF_01302_B">
    <property type="entry name" value="Ribosomal_uS8_B"/>
    <property type="match status" value="1"/>
</dbReference>
<dbReference type="InterPro" id="IPR000630">
    <property type="entry name" value="Ribosomal_uS8"/>
</dbReference>
<dbReference type="InterPro" id="IPR035987">
    <property type="entry name" value="Ribosomal_uS8_sf"/>
</dbReference>
<dbReference type="NCBIfam" id="NF001109">
    <property type="entry name" value="PRK00136.1"/>
    <property type="match status" value="1"/>
</dbReference>
<dbReference type="PANTHER" id="PTHR11758">
    <property type="entry name" value="40S RIBOSOMAL PROTEIN S15A"/>
    <property type="match status" value="1"/>
</dbReference>
<dbReference type="Pfam" id="PF00410">
    <property type="entry name" value="Ribosomal_S8"/>
    <property type="match status" value="1"/>
</dbReference>
<dbReference type="SUPFAM" id="SSF56047">
    <property type="entry name" value="Ribosomal protein S8"/>
    <property type="match status" value="1"/>
</dbReference>
<comment type="function">
    <text evidence="1">One of the primary rRNA binding proteins, it binds directly to 16S rRNA central domain where it helps coordinate assembly of the platform of the 30S subunit.</text>
</comment>
<comment type="subunit">
    <text evidence="1">Part of the 30S ribosomal subunit. Contacts proteins S5 and S12.</text>
</comment>
<comment type="similarity">
    <text evidence="1">Belongs to the universal ribosomal protein uS8 family.</text>
</comment>
<name>RS8_KOCRD</name>
<protein>
    <recommendedName>
        <fullName evidence="1">Small ribosomal subunit protein uS8</fullName>
    </recommendedName>
    <alternativeName>
        <fullName evidence="2">30S ribosomal protein S8</fullName>
    </alternativeName>
</protein>
<organism>
    <name type="scientific">Kocuria rhizophila (strain ATCC 9341 / DSM 348 / NBRC 103217 / DC2201)</name>
    <dbReference type="NCBI Taxonomy" id="378753"/>
    <lineage>
        <taxon>Bacteria</taxon>
        <taxon>Bacillati</taxon>
        <taxon>Actinomycetota</taxon>
        <taxon>Actinomycetes</taxon>
        <taxon>Micrococcales</taxon>
        <taxon>Micrococcaceae</taxon>
        <taxon>Kocuria</taxon>
    </lineage>
</organism>
<accession>B2GJ06</accession>
<reference key="1">
    <citation type="journal article" date="2008" name="J. Bacteriol.">
        <title>Complete genome sequence of the soil actinomycete Kocuria rhizophila.</title>
        <authorList>
            <person name="Takarada H."/>
            <person name="Sekine M."/>
            <person name="Kosugi H."/>
            <person name="Matsuo Y."/>
            <person name="Fujisawa T."/>
            <person name="Omata S."/>
            <person name="Kishi E."/>
            <person name="Shimizu A."/>
            <person name="Tsukatani N."/>
            <person name="Tanikawa S."/>
            <person name="Fujita N."/>
            <person name="Harayama S."/>
        </authorList>
    </citation>
    <scope>NUCLEOTIDE SEQUENCE [LARGE SCALE GENOMIC DNA]</scope>
    <source>
        <strain>ATCC 9341 / DSM 348 / NBRC 103217 / DC2201</strain>
    </source>
</reference>
<proteinExistence type="inferred from homology"/>
<sequence>MTMTDPVADMLTRLRNANSAYHDTVSMPYSKLKARIAEILKAEGYIADWSEEPARVGKTLTLSLKFGSNRERSIAGVRRISKPGLRVYAKSTNLPRVFGGLGIAILSTSSGLLTDKQAGKKGVGGEVLAYVW</sequence>
<keyword id="KW-1185">Reference proteome</keyword>
<keyword id="KW-0687">Ribonucleoprotein</keyword>
<keyword id="KW-0689">Ribosomal protein</keyword>
<keyword id="KW-0694">RNA-binding</keyword>
<keyword id="KW-0699">rRNA-binding</keyword>
<gene>
    <name evidence="1" type="primary">rpsH</name>
    <name type="ordered locus">KRH_06290</name>
</gene>
<evidence type="ECO:0000255" key="1">
    <source>
        <dbReference type="HAMAP-Rule" id="MF_01302"/>
    </source>
</evidence>
<evidence type="ECO:0000305" key="2"/>